<accession>Q0BYD9</accession>
<organism>
    <name type="scientific">Hyphomonas neptunium (strain ATCC 15444)</name>
    <dbReference type="NCBI Taxonomy" id="228405"/>
    <lineage>
        <taxon>Bacteria</taxon>
        <taxon>Pseudomonadati</taxon>
        <taxon>Pseudomonadota</taxon>
        <taxon>Alphaproteobacteria</taxon>
        <taxon>Hyphomonadales</taxon>
        <taxon>Hyphomonadaceae</taxon>
        <taxon>Hyphomonas</taxon>
    </lineage>
</organism>
<comment type="subunit">
    <text evidence="1">Part of the 50S ribosomal subunit. Contacts protein L32.</text>
</comment>
<comment type="similarity">
    <text evidence="1">Belongs to the bacterial ribosomal protein bL17 family.</text>
</comment>
<evidence type="ECO:0000255" key="1">
    <source>
        <dbReference type="HAMAP-Rule" id="MF_01368"/>
    </source>
</evidence>
<evidence type="ECO:0000305" key="2"/>
<keyword id="KW-1185">Reference proteome</keyword>
<keyword id="KW-0687">Ribonucleoprotein</keyword>
<keyword id="KW-0689">Ribosomal protein</keyword>
<reference key="1">
    <citation type="journal article" date="2006" name="J. Bacteriol.">
        <title>Comparative genomic evidence for a close relationship between the dimorphic prosthecate bacteria Hyphomonas neptunium and Caulobacter crescentus.</title>
        <authorList>
            <person name="Badger J.H."/>
            <person name="Hoover T.R."/>
            <person name="Brun Y.V."/>
            <person name="Weiner R.M."/>
            <person name="Laub M.T."/>
            <person name="Alexandre G."/>
            <person name="Mrazek J."/>
            <person name="Ren Q."/>
            <person name="Paulsen I.T."/>
            <person name="Nelson K.E."/>
            <person name="Khouri H.M."/>
            <person name="Radune D."/>
            <person name="Sosa J."/>
            <person name="Dodson R.J."/>
            <person name="Sullivan S.A."/>
            <person name="Rosovitz M.J."/>
            <person name="Madupu R."/>
            <person name="Brinkac L.M."/>
            <person name="Durkin A.S."/>
            <person name="Daugherty S.C."/>
            <person name="Kothari S.P."/>
            <person name="Giglio M.G."/>
            <person name="Zhou L."/>
            <person name="Haft D.H."/>
            <person name="Selengut J.D."/>
            <person name="Davidsen T.M."/>
            <person name="Yang Q."/>
            <person name="Zafar N."/>
            <person name="Ward N.L."/>
        </authorList>
    </citation>
    <scope>NUCLEOTIDE SEQUENCE [LARGE SCALE GENOMIC DNA]</scope>
    <source>
        <strain>ATCC 15444</strain>
    </source>
</reference>
<gene>
    <name evidence="1" type="primary">rplQ</name>
    <name type="ordered locus">HNE_2826</name>
</gene>
<sequence length="140" mass="15418">MRHQIAHRKLNRTASHRKAMFANMAASLIEHEQIVTTLPKAKEMAPLMDKLVSLAKKGDLAARRAALSQVRNETAVRKLFDVFGDRYKDRNGGYTRVVKAGFRPGDNAPIAVLELVDRDESAKGAADKARHAAELEAAEG</sequence>
<name>RL17_HYPNA</name>
<proteinExistence type="inferred from homology"/>
<protein>
    <recommendedName>
        <fullName evidence="1">Large ribosomal subunit protein bL17</fullName>
    </recommendedName>
    <alternativeName>
        <fullName evidence="2">50S ribosomal protein L17</fullName>
    </alternativeName>
</protein>
<dbReference type="EMBL" id="CP000158">
    <property type="protein sequence ID" value="ABI75378.1"/>
    <property type="molecule type" value="Genomic_DNA"/>
</dbReference>
<dbReference type="RefSeq" id="WP_011647801.1">
    <property type="nucleotide sequence ID" value="NC_008358.1"/>
</dbReference>
<dbReference type="SMR" id="Q0BYD9"/>
<dbReference type="STRING" id="228405.HNE_2826"/>
<dbReference type="KEGG" id="hne:HNE_2826"/>
<dbReference type="eggNOG" id="COG0203">
    <property type="taxonomic scope" value="Bacteria"/>
</dbReference>
<dbReference type="HOGENOM" id="CLU_074407_2_0_5"/>
<dbReference type="Proteomes" id="UP000001959">
    <property type="component" value="Chromosome"/>
</dbReference>
<dbReference type="GO" id="GO:0022625">
    <property type="term" value="C:cytosolic large ribosomal subunit"/>
    <property type="evidence" value="ECO:0007669"/>
    <property type="project" value="TreeGrafter"/>
</dbReference>
<dbReference type="GO" id="GO:0003735">
    <property type="term" value="F:structural constituent of ribosome"/>
    <property type="evidence" value="ECO:0007669"/>
    <property type="project" value="InterPro"/>
</dbReference>
<dbReference type="GO" id="GO:0006412">
    <property type="term" value="P:translation"/>
    <property type="evidence" value="ECO:0007669"/>
    <property type="project" value="UniProtKB-UniRule"/>
</dbReference>
<dbReference type="FunFam" id="3.90.1030.10:FF:000001">
    <property type="entry name" value="50S ribosomal protein L17"/>
    <property type="match status" value="1"/>
</dbReference>
<dbReference type="Gene3D" id="3.90.1030.10">
    <property type="entry name" value="Ribosomal protein L17"/>
    <property type="match status" value="1"/>
</dbReference>
<dbReference type="HAMAP" id="MF_01368">
    <property type="entry name" value="Ribosomal_bL17"/>
    <property type="match status" value="1"/>
</dbReference>
<dbReference type="InterPro" id="IPR000456">
    <property type="entry name" value="Ribosomal_bL17"/>
</dbReference>
<dbReference type="InterPro" id="IPR036373">
    <property type="entry name" value="Ribosomal_bL17_sf"/>
</dbReference>
<dbReference type="NCBIfam" id="TIGR00059">
    <property type="entry name" value="L17"/>
    <property type="match status" value="1"/>
</dbReference>
<dbReference type="PANTHER" id="PTHR14413:SF16">
    <property type="entry name" value="LARGE RIBOSOMAL SUBUNIT PROTEIN BL17M"/>
    <property type="match status" value="1"/>
</dbReference>
<dbReference type="PANTHER" id="PTHR14413">
    <property type="entry name" value="RIBOSOMAL PROTEIN L17"/>
    <property type="match status" value="1"/>
</dbReference>
<dbReference type="Pfam" id="PF01196">
    <property type="entry name" value="Ribosomal_L17"/>
    <property type="match status" value="1"/>
</dbReference>
<dbReference type="SUPFAM" id="SSF64263">
    <property type="entry name" value="Prokaryotic ribosomal protein L17"/>
    <property type="match status" value="1"/>
</dbReference>
<feature type="chain" id="PRO_0000267882" description="Large ribosomal subunit protein bL17">
    <location>
        <begin position="1"/>
        <end position="140"/>
    </location>
</feature>